<organism>
    <name type="scientific">Burkholderia cenocepacia (strain HI2424)</name>
    <dbReference type="NCBI Taxonomy" id="331272"/>
    <lineage>
        <taxon>Bacteria</taxon>
        <taxon>Pseudomonadati</taxon>
        <taxon>Pseudomonadota</taxon>
        <taxon>Betaproteobacteria</taxon>
        <taxon>Burkholderiales</taxon>
        <taxon>Burkholderiaceae</taxon>
        <taxon>Burkholderia</taxon>
        <taxon>Burkholderia cepacia complex</taxon>
    </lineage>
</organism>
<feature type="chain" id="PRO_1000022267" description="Potassium-transporting ATPase KdpC subunit">
    <location>
        <begin position="1"/>
        <end position="193"/>
    </location>
</feature>
<feature type="transmembrane region" description="Helical" evidence="1">
    <location>
        <begin position="7"/>
        <end position="27"/>
    </location>
</feature>
<protein>
    <recommendedName>
        <fullName evidence="1">Potassium-transporting ATPase KdpC subunit</fullName>
    </recommendedName>
    <alternativeName>
        <fullName evidence="1">ATP phosphohydrolase [potassium-transporting] C chain</fullName>
    </alternativeName>
    <alternativeName>
        <fullName evidence="1">Potassium-binding and translocating subunit C</fullName>
    </alternativeName>
    <alternativeName>
        <fullName evidence="1">Potassium-translocating ATPase C chain</fullName>
    </alternativeName>
</protein>
<dbReference type="EMBL" id="CP000458">
    <property type="protein sequence ID" value="ABK09037.1"/>
    <property type="molecule type" value="Genomic_DNA"/>
</dbReference>
<dbReference type="RefSeq" id="WP_011545835.1">
    <property type="nucleotide sequence ID" value="NC_008542.1"/>
</dbReference>
<dbReference type="SMR" id="A0K960"/>
<dbReference type="KEGG" id="bch:Bcen2424_2286"/>
<dbReference type="HOGENOM" id="CLU_077094_2_0_4"/>
<dbReference type="GO" id="GO:0005886">
    <property type="term" value="C:plasma membrane"/>
    <property type="evidence" value="ECO:0007669"/>
    <property type="project" value="UniProtKB-SubCell"/>
</dbReference>
<dbReference type="GO" id="GO:0005524">
    <property type="term" value="F:ATP binding"/>
    <property type="evidence" value="ECO:0007669"/>
    <property type="project" value="UniProtKB-UniRule"/>
</dbReference>
<dbReference type="GO" id="GO:0008556">
    <property type="term" value="F:P-type potassium transmembrane transporter activity"/>
    <property type="evidence" value="ECO:0007669"/>
    <property type="project" value="InterPro"/>
</dbReference>
<dbReference type="HAMAP" id="MF_00276">
    <property type="entry name" value="KdpC"/>
    <property type="match status" value="1"/>
</dbReference>
<dbReference type="InterPro" id="IPR003820">
    <property type="entry name" value="KdpC"/>
</dbReference>
<dbReference type="NCBIfam" id="TIGR00681">
    <property type="entry name" value="kdpC"/>
    <property type="match status" value="1"/>
</dbReference>
<dbReference type="NCBIfam" id="NF001454">
    <property type="entry name" value="PRK00315.1"/>
    <property type="match status" value="1"/>
</dbReference>
<dbReference type="PANTHER" id="PTHR30042">
    <property type="entry name" value="POTASSIUM-TRANSPORTING ATPASE C CHAIN"/>
    <property type="match status" value="1"/>
</dbReference>
<dbReference type="PANTHER" id="PTHR30042:SF2">
    <property type="entry name" value="POTASSIUM-TRANSPORTING ATPASE KDPC SUBUNIT"/>
    <property type="match status" value="1"/>
</dbReference>
<dbReference type="Pfam" id="PF02669">
    <property type="entry name" value="KdpC"/>
    <property type="match status" value="1"/>
</dbReference>
<dbReference type="PIRSF" id="PIRSF001296">
    <property type="entry name" value="K_ATPase_KdpC"/>
    <property type="match status" value="1"/>
</dbReference>
<name>KDPC_BURCH</name>
<gene>
    <name evidence="1" type="primary">kdpC</name>
    <name type="ordered locus">Bcen2424_2286</name>
</gene>
<comment type="function">
    <text evidence="1">Part of the high-affinity ATP-driven potassium transport (or Kdp) system, which catalyzes the hydrolysis of ATP coupled with the electrogenic transport of potassium into the cytoplasm. This subunit acts as a catalytic chaperone that increases the ATP-binding affinity of the ATP-hydrolyzing subunit KdpB by the formation of a transient KdpB/KdpC/ATP ternary complex.</text>
</comment>
<comment type="subunit">
    <text evidence="1">The system is composed of three essential subunits: KdpA, KdpB and KdpC.</text>
</comment>
<comment type="subcellular location">
    <subcellularLocation>
        <location evidence="1">Cell inner membrane</location>
        <topology evidence="1">Single-pass membrane protein</topology>
    </subcellularLocation>
</comment>
<comment type="similarity">
    <text evidence="1">Belongs to the KdpC family.</text>
</comment>
<proteinExistence type="inferred from homology"/>
<evidence type="ECO:0000255" key="1">
    <source>
        <dbReference type="HAMAP-Rule" id="MF_00276"/>
    </source>
</evidence>
<reference key="1">
    <citation type="submission" date="2006-08" db="EMBL/GenBank/DDBJ databases">
        <title>Complete sequence of chromosome 1 of Burkholderia cenocepacia HI2424.</title>
        <authorList>
            <person name="Copeland A."/>
            <person name="Lucas S."/>
            <person name="Lapidus A."/>
            <person name="Barry K."/>
            <person name="Detter J.C."/>
            <person name="Glavina del Rio T."/>
            <person name="Hammon N."/>
            <person name="Israni S."/>
            <person name="Pitluck S."/>
            <person name="Chain P."/>
            <person name="Malfatti S."/>
            <person name="Shin M."/>
            <person name="Vergez L."/>
            <person name="Schmutz J."/>
            <person name="Larimer F."/>
            <person name="Land M."/>
            <person name="Hauser L."/>
            <person name="Kyrpides N."/>
            <person name="Kim E."/>
            <person name="LiPuma J.J."/>
            <person name="Gonzalez C.F."/>
            <person name="Konstantinidis K."/>
            <person name="Tiedje J.M."/>
            <person name="Richardson P."/>
        </authorList>
    </citation>
    <scope>NUCLEOTIDE SEQUENCE [LARGE SCALE GENOMIC DNA]</scope>
    <source>
        <strain>HI2424</strain>
    </source>
</reference>
<sequence length="193" mass="19869">MKSLIRPLVVLFVVLNAVTGLAYPAVMTVFGQAVFPSQANGSLIEQNGKVVGSALIGQPFDAPKYFWGRLSATAPMPYNAAGSGGSNLGPLNPSLADQVKARIAALRDAGTDLSKPVPVDLVTASASGLDPEITPAAAAYQVERVAKARNLTPDAVAQLVAANTTGRQFGVLGEPRVNVLKLNLALDAAQAAH</sequence>
<accession>A0K960</accession>
<keyword id="KW-0067">ATP-binding</keyword>
<keyword id="KW-0997">Cell inner membrane</keyword>
<keyword id="KW-1003">Cell membrane</keyword>
<keyword id="KW-0406">Ion transport</keyword>
<keyword id="KW-0472">Membrane</keyword>
<keyword id="KW-0547">Nucleotide-binding</keyword>
<keyword id="KW-0630">Potassium</keyword>
<keyword id="KW-0633">Potassium transport</keyword>
<keyword id="KW-0812">Transmembrane</keyword>
<keyword id="KW-1133">Transmembrane helix</keyword>
<keyword id="KW-0813">Transport</keyword>